<organism>
    <name type="scientific">Escherichia coli (strain K12)</name>
    <dbReference type="NCBI Taxonomy" id="83333"/>
    <lineage>
        <taxon>Bacteria</taxon>
        <taxon>Pseudomonadati</taxon>
        <taxon>Pseudomonadota</taxon>
        <taxon>Gammaproteobacteria</taxon>
        <taxon>Enterobacterales</taxon>
        <taxon>Enterobacteriaceae</taxon>
        <taxon>Escherichia</taxon>
    </lineage>
</organism>
<proteinExistence type="inferred from homology"/>
<dbReference type="EMBL" id="D90281">
    <property type="protein sequence ID" value="BAA14324.1"/>
    <property type="status" value="ALT_INIT"/>
    <property type="molecule type" value="Genomic_DNA"/>
</dbReference>
<dbReference type="EMBL" id="U28377">
    <property type="protein sequence ID" value="AAA69077.1"/>
    <property type="status" value="ALT_INIT"/>
    <property type="molecule type" value="Genomic_DNA"/>
</dbReference>
<dbReference type="EMBL" id="U00096">
    <property type="protein sequence ID" value="AAC75947.2"/>
    <property type="molecule type" value="Genomic_DNA"/>
</dbReference>
<dbReference type="EMBL" id="AP009048">
    <property type="protein sequence ID" value="BAE76974.1"/>
    <property type="molecule type" value="Genomic_DNA"/>
</dbReference>
<dbReference type="PIR" id="A47020">
    <property type="entry name" value="A47020"/>
</dbReference>
<dbReference type="RefSeq" id="NP_417385.4">
    <property type="nucleotide sequence ID" value="NC_000913.3"/>
</dbReference>
<dbReference type="RefSeq" id="WP_001295378.1">
    <property type="nucleotide sequence ID" value="NZ_STEB01000001.1"/>
</dbReference>
<dbReference type="SMR" id="P0A8C4"/>
<dbReference type="BioGRID" id="4259237">
    <property type="interactions" value="24"/>
</dbReference>
<dbReference type="BioGRID" id="851722">
    <property type="interactions" value="7"/>
</dbReference>
<dbReference type="DIP" id="DIP-48191N"/>
<dbReference type="FunCoup" id="P0A8C4">
    <property type="interactions" value="67"/>
</dbReference>
<dbReference type="IntAct" id="P0A8C4">
    <property type="interactions" value="8"/>
</dbReference>
<dbReference type="STRING" id="511145.b2909"/>
<dbReference type="jPOST" id="P0A8C4"/>
<dbReference type="PaxDb" id="511145-b2909"/>
<dbReference type="EnsemblBacteria" id="AAC75947">
    <property type="protein sequence ID" value="AAC75947"/>
    <property type="gene ID" value="b2909"/>
</dbReference>
<dbReference type="GeneID" id="93779092"/>
<dbReference type="GeneID" id="947400"/>
<dbReference type="KEGG" id="ecj:JW5473"/>
<dbReference type="KEGG" id="eco:b2909"/>
<dbReference type="PATRIC" id="fig|511145.12.peg.3004"/>
<dbReference type="EchoBASE" id="EB1299"/>
<dbReference type="eggNOG" id="COG3079">
    <property type="taxonomic scope" value="Bacteria"/>
</dbReference>
<dbReference type="HOGENOM" id="CLU_085336_1_0_6"/>
<dbReference type="InParanoid" id="P0A8C4"/>
<dbReference type="OMA" id="WVNHFIS"/>
<dbReference type="OrthoDB" id="9783391at2"/>
<dbReference type="PhylomeDB" id="P0A8C4"/>
<dbReference type="BioCyc" id="EcoCyc:EG11323-MONOMER"/>
<dbReference type="PRO" id="PR:P0A8C4"/>
<dbReference type="Proteomes" id="UP000000625">
    <property type="component" value="Chromosome"/>
</dbReference>
<dbReference type="GO" id="GO:0005829">
    <property type="term" value="C:cytosol"/>
    <property type="evidence" value="ECO:0000314"/>
    <property type="project" value="EcoCyc"/>
</dbReference>
<dbReference type="FunFam" id="1.20.120.740:FF:000001">
    <property type="entry name" value="UPF0149 protein YgfB"/>
    <property type="match status" value="1"/>
</dbReference>
<dbReference type="Gene3D" id="1.20.120.740">
    <property type="entry name" value="YgfB uncharacterised protein family UPF0149, PF03695"/>
    <property type="match status" value="1"/>
</dbReference>
<dbReference type="HAMAP" id="MF_00346">
    <property type="entry name" value="UPF0149"/>
    <property type="match status" value="1"/>
</dbReference>
<dbReference type="InterPro" id="IPR011978">
    <property type="entry name" value="YgfB-like"/>
</dbReference>
<dbReference type="InterPro" id="IPR036255">
    <property type="entry name" value="YgfB-like_sf"/>
</dbReference>
<dbReference type="NCBIfam" id="NF002477">
    <property type="entry name" value="PRK01736.1"/>
    <property type="match status" value="1"/>
</dbReference>
<dbReference type="NCBIfam" id="TIGR02292">
    <property type="entry name" value="ygfB_yecA"/>
    <property type="match status" value="1"/>
</dbReference>
<dbReference type="PANTHER" id="PTHR37528">
    <property type="entry name" value="UPF0149 PROTEIN YGFB"/>
    <property type="match status" value="1"/>
</dbReference>
<dbReference type="PANTHER" id="PTHR37528:SF1">
    <property type="entry name" value="UPF0149 PROTEIN YGFB"/>
    <property type="match status" value="1"/>
</dbReference>
<dbReference type="Pfam" id="PF03695">
    <property type="entry name" value="UPF0149"/>
    <property type="match status" value="1"/>
</dbReference>
<dbReference type="SUPFAM" id="SSF101327">
    <property type="entry name" value="YgfB-like"/>
    <property type="match status" value="1"/>
</dbReference>
<protein>
    <recommendedName>
        <fullName>UPF0149 protein YgfB</fullName>
    </recommendedName>
</protein>
<evidence type="ECO:0000305" key="1"/>
<sequence length="192" mass="21230">MSIQNEMPGYNEMNQYLNQQGTGLTPAEMHGLISGMICGGNDDSSWLPLLHDLTNEGMAFGHELAQALRKMHSATSDALQDDGFLFQLYLPDGDDVSVFDRADALAGWVNHFLLGLGVTQPKLDKVTGETGEAIDDLRNIAQLGYDEDEDQEELEMSLEEIIEYVRVAALLCHDTFTHPQPTAPEVQKPTLH</sequence>
<accession>P0A8C4</accession>
<accession>P25533</accession>
<accession>Q2M9T2</accession>
<accession>Q8XD28</accession>
<comment type="similarity">
    <text evidence="1">Belongs to the UPF0149 family.</text>
</comment>
<comment type="sequence caution" evidence="1">
    <conflict type="erroneous initiation">
        <sequence resource="EMBL-CDS" id="AAA69077"/>
    </conflict>
    <text>Extended N-terminus.</text>
</comment>
<comment type="sequence caution" evidence="1">
    <conflict type="erroneous initiation">
        <sequence resource="EMBL-CDS" id="BAA14324"/>
    </conflict>
    <text>Extended N-terminus.</text>
</comment>
<name>YGFB_ECOLI</name>
<keyword id="KW-1185">Reference proteome</keyword>
<feature type="chain" id="PRO_0000207558" description="UPF0149 protein YgfB">
    <location>
        <begin position="1"/>
        <end position="192"/>
    </location>
</feature>
<reference key="1">
    <citation type="journal article" date="1992" name="J. Bacteriol.">
        <title>Isolation and characterization of a light-sensitive mutant of Escherichia coli K-12 with a mutation in a gene that is required for the biosynthesis of ubiquinone.</title>
        <authorList>
            <person name="Nakahigashi K."/>
            <person name="Miyamoto K."/>
            <person name="Nishimura K."/>
            <person name="Inokuchi H."/>
        </authorList>
    </citation>
    <scope>NUCLEOTIDE SEQUENCE [GENOMIC DNA]</scope>
    <source>
        <strain>ATCC 33694 / HB101</strain>
    </source>
</reference>
<reference key="2">
    <citation type="journal article" date="1997" name="Science">
        <title>The complete genome sequence of Escherichia coli K-12.</title>
        <authorList>
            <person name="Blattner F.R."/>
            <person name="Plunkett G. III"/>
            <person name="Bloch C.A."/>
            <person name="Perna N.T."/>
            <person name="Burland V."/>
            <person name="Riley M."/>
            <person name="Collado-Vides J."/>
            <person name="Glasner J.D."/>
            <person name="Rode C.K."/>
            <person name="Mayhew G.F."/>
            <person name="Gregor J."/>
            <person name="Davis N.W."/>
            <person name="Kirkpatrick H.A."/>
            <person name="Goeden M.A."/>
            <person name="Rose D.J."/>
            <person name="Mau B."/>
            <person name="Shao Y."/>
        </authorList>
    </citation>
    <scope>NUCLEOTIDE SEQUENCE [LARGE SCALE GENOMIC DNA]</scope>
    <source>
        <strain>K12 / MG1655 / ATCC 47076</strain>
    </source>
</reference>
<reference key="3">
    <citation type="journal article" date="2006" name="Mol. Syst. Biol.">
        <title>Highly accurate genome sequences of Escherichia coli K-12 strains MG1655 and W3110.</title>
        <authorList>
            <person name="Hayashi K."/>
            <person name="Morooka N."/>
            <person name="Yamamoto Y."/>
            <person name="Fujita K."/>
            <person name="Isono K."/>
            <person name="Choi S."/>
            <person name="Ohtsubo E."/>
            <person name="Baba T."/>
            <person name="Wanner B.L."/>
            <person name="Mori H."/>
            <person name="Horiuchi T."/>
        </authorList>
    </citation>
    <scope>NUCLEOTIDE SEQUENCE [LARGE SCALE GENOMIC DNA]</scope>
    <source>
        <strain>K12 / W3110 / ATCC 27325 / DSM 5911</strain>
    </source>
</reference>
<gene>
    <name type="primary">ygfB</name>
    <name type="ordered locus">b2909</name>
    <name type="ordered locus">JW5473</name>
</gene>